<dbReference type="EC" id="1.13.11.-" evidence="3 4"/>
<dbReference type="EMBL" id="KF899847">
    <property type="protein sequence ID" value="AIA09488.1"/>
    <property type="molecule type" value="Genomic_DNA"/>
</dbReference>
<dbReference type="SMR" id="A0A059WI14"/>
<dbReference type="BioCyc" id="MetaCyc:MONOMER-21007"/>
<dbReference type="GO" id="GO:0008168">
    <property type="term" value="F:methyltransferase activity"/>
    <property type="evidence" value="ECO:0007669"/>
    <property type="project" value="UniProtKB-KW"/>
</dbReference>
<dbReference type="GO" id="GO:0032259">
    <property type="term" value="P:methylation"/>
    <property type="evidence" value="ECO:0007669"/>
    <property type="project" value="UniProtKB-KW"/>
</dbReference>
<dbReference type="GO" id="GO:0046686">
    <property type="term" value="P:response to cadmium ion"/>
    <property type="evidence" value="ECO:0007669"/>
    <property type="project" value="TreeGrafter"/>
</dbReference>
<dbReference type="Gene3D" id="3.10.180.10">
    <property type="entry name" value="2,3-Dihydroxybiphenyl 1,2-Dioxygenase, domain 1"/>
    <property type="match status" value="1"/>
</dbReference>
<dbReference type="InterPro" id="IPR052393">
    <property type="entry name" value="Cadmium-induced_rsp"/>
</dbReference>
<dbReference type="InterPro" id="IPR029068">
    <property type="entry name" value="Glyas_Bleomycin-R_OHBP_Dase"/>
</dbReference>
<dbReference type="InterPro" id="IPR004360">
    <property type="entry name" value="Glyas_Fos-R_dOase_dom"/>
</dbReference>
<dbReference type="InterPro" id="IPR037523">
    <property type="entry name" value="VOC"/>
</dbReference>
<dbReference type="InterPro" id="IPR049789">
    <property type="entry name" value="YqcK/CadI-like"/>
</dbReference>
<dbReference type="NCBIfam" id="NF041414">
    <property type="entry name" value="ArsI_CadI_VOC"/>
    <property type="match status" value="1"/>
</dbReference>
<dbReference type="PANTHER" id="PTHR41294">
    <property type="entry name" value="CADMIUM-INDUCED PROTEIN CADI"/>
    <property type="match status" value="1"/>
</dbReference>
<dbReference type="PANTHER" id="PTHR41294:SF1">
    <property type="entry name" value="CADMIUM-INDUCED PROTEIN CADI"/>
    <property type="match status" value="1"/>
</dbReference>
<dbReference type="Pfam" id="PF00903">
    <property type="entry name" value="Glyoxalase"/>
    <property type="match status" value="1"/>
</dbReference>
<dbReference type="SUPFAM" id="SSF54593">
    <property type="entry name" value="Glyoxalase/Bleomycin resistance protein/Dihydroxybiphenyl dioxygenase"/>
    <property type="match status" value="1"/>
</dbReference>
<dbReference type="PROSITE" id="PS51819">
    <property type="entry name" value="VOC"/>
    <property type="match status" value="1"/>
</dbReference>
<evidence type="ECO:0000250" key="1">
    <source>
        <dbReference type="UniProtKB" id="D1A230"/>
    </source>
</evidence>
<evidence type="ECO:0000255" key="2">
    <source>
        <dbReference type="PROSITE-ProRule" id="PRU01163"/>
    </source>
</evidence>
<evidence type="ECO:0000269" key="3">
    <source>
    </source>
</evidence>
<evidence type="ECO:0000269" key="4">
    <source>
    </source>
</evidence>
<evidence type="ECO:0000303" key="5">
    <source>
    </source>
</evidence>
<evidence type="ECO:0000303" key="6">
    <source>
    </source>
</evidence>
<evidence type="ECO:0000305" key="7">
    <source>
    </source>
</evidence>
<evidence type="ECO:0000305" key="8">
    <source>
    </source>
</evidence>
<evidence type="ECO:0000312" key="9">
    <source>
        <dbReference type="EMBL" id="AIA09488.1"/>
    </source>
</evidence>
<keyword id="KW-0216">Detoxification</keyword>
<keyword id="KW-0223">Dioxygenase</keyword>
<keyword id="KW-0408">Iron</keyword>
<keyword id="KW-0479">Metal-binding</keyword>
<keyword id="KW-0560">Oxidoreductase</keyword>
<comment type="function">
    <text evidence="3 4">Nonheme iron-dependent dioxygenase that can break carbon-arsenic bonds, playing a role in the detoxification of environmental organoarsenical compounds. Catalyzes the oxygen-dependent demethylation of highly toxic methylarsonous acid (MAs(III)) to arsenite, which can then be exported out of the cell. Can also cleave the C-As bond in several trivalent aromatic arsenicals, including roxarsone (III), nitarsone (III) and (4-aminophenyl)arsonous acid. Organoarsenical degradation by this enzyme is proposed to have a significant impact on the arsenic biogeocycle that maintains a balance between organic and inorganic species.</text>
</comment>
<comment type="catalytic activity">
    <reaction evidence="3 4">
        <text>methylarsonous acid + AH2 + O2 = arsenite + methanol + A + H(+)</text>
        <dbReference type="Rhea" id="RHEA:82323"/>
        <dbReference type="ChEBI" id="CHEBI:13193"/>
        <dbReference type="ChEBI" id="CHEBI:15378"/>
        <dbReference type="ChEBI" id="CHEBI:15379"/>
        <dbReference type="ChEBI" id="CHEBI:17499"/>
        <dbReference type="ChEBI" id="CHEBI:17790"/>
        <dbReference type="ChEBI" id="CHEBI:17826"/>
        <dbReference type="ChEBI" id="CHEBI:29242"/>
    </reaction>
    <physiologicalReaction direction="left-to-right" evidence="3">
        <dbReference type="Rhea" id="RHEA:82324"/>
    </physiologicalReaction>
</comment>
<comment type="catalytic activity">
    <reaction evidence="3 4">
        <text>roxarsone (III) + AH2 + O2 = 4-hydroxy-3-nitrocyclohexa-2,5-dien-1-one + arsenite + A + H(+)</text>
        <dbReference type="Rhea" id="RHEA:82363"/>
        <dbReference type="ChEBI" id="CHEBI:13193"/>
        <dbReference type="ChEBI" id="CHEBI:15378"/>
        <dbReference type="ChEBI" id="CHEBI:15379"/>
        <dbReference type="ChEBI" id="CHEBI:17499"/>
        <dbReference type="ChEBI" id="CHEBI:29242"/>
        <dbReference type="ChEBI" id="CHEBI:231974"/>
        <dbReference type="ChEBI" id="CHEBI:231975"/>
    </reaction>
    <physiologicalReaction direction="left-to-right" evidence="3">
        <dbReference type="Rhea" id="RHEA:82364"/>
    </physiologicalReaction>
</comment>
<comment type="catalytic activity">
    <reaction evidence="3">
        <text>nitarsone (III) + AH2 + O2 = 4-nitrocyclohexa-2,5-dien-1-one + arsenite + A + H(+)</text>
        <dbReference type="Rhea" id="RHEA:82439"/>
        <dbReference type="ChEBI" id="CHEBI:13193"/>
        <dbReference type="ChEBI" id="CHEBI:15378"/>
        <dbReference type="ChEBI" id="CHEBI:15379"/>
        <dbReference type="ChEBI" id="CHEBI:17499"/>
        <dbReference type="ChEBI" id="CHEBI:29242"/>
        <dbReference type="ChEBI" id="CHEBI:232329"/>
        <dbReference type="ChEBI" id="CHEBI:232330"/>
    </reaction>
    <physiologicalReaction direction="left-to-right" evidence="7">
        <dbReference type="Rhea" id="RHEA:82440"/>
    </physiologicalReaction>
</comment>
<comment type="catalytic activity">
    <reaction evidence="3">
        <text>4-aminophenylarsonous acid + AH2 + O2 = 4-aminocyclohexa-2,5-dien-1-one + arsenite + A</text>
        <dbReference type="Rhea" id="RHEA:82443"/>
        <dbReference type="ChEBI" id="CHEBI:13193"/>
        <dbReference type="ChEBI" id="CHEBI:15379"/>
        <dbReference type="ChEBI" id="CHEBI:17499"/>
        <dbReference type="ChEBI" id="CHEBI:29242"/>
        <dbReference type="ChEBI" id="CHEBI:50022"/>
        <dbReference type="ChEBI" id="CHEBI:232331"/>
    </reaction>
    <physiologicalReaction direction="left-to-right" evidence="7">
        <dbReference type="Rhea" id="RHEA:82444"/>
    </physiologicalReaction>
</comment>
<comment type="cofactor">
    <cofactor evidence="3 4">
        <name>Fe(2+)</name>
        <dbReference type="ChEBI" id="CHEBI:29033"/>
    </cofactor>
</comment>
<comment type="activity regulation">
    <text evidence="4">Inhibited in vitro by reagents that chemically modify histidine residues (diethylpyrocarbonate (DEPC)), aspartate or glutamate residues (1-ethyl-3-(3-(dimethylamino)propyl) carbodiimide (EDC)), or cysteine residues (N-ethylmaleimide (NEM) or iodoacetamide (IAA)).</text>
</comment>
<comment type="biophysicochemical properties">
    <kinetics>
        <KM evidence="3">2.9 uM for methylarsonous acid</KM>
        <KM evidence="3">6.4 uM for roxarsone (III)</KM>
        <text evidence="3">kcat is 0.25 min(-1) with methylarsonous acid as substrate. kcat is 0.22 min(-1) with roxarsone (III) as substrate.</text>
    </kinetics>
</comment>
<comment type="domain">
    <text evidence="1 8">The thiolates of the vicinal cysteine pair (Cys96-Cys97) directly coordinate the arsenic atom of the organoarsenical substrate.</text>
</comment>
<comment type="miscellaneous">
    <text evidence="7 8">Organoarsenicals are used as herbicides, pesticides, antimicrobial growth promoters, and chemical warfare agents. Arsenic is the most widespread environmental toxin and is classified as a Group 1 human carcinogen.</text>
</comment>
<accession>A0A059WI14</accession>
<sequence length="161" mass="18109">MKYAHVGLNVTNLEKSIEFYSKLFGAEPVKVKPDYAKFLLESPGLNFTLNLRDEVNGNQVGHFGIQVESTEEVVAHKNRLAENGILSQYDEINTTCCYALQDKFWIHDPDGNEWEFFYTKTTVEENSTHPPTCCVNEPNVEKAECCSPTASSNKDTSNCCS</sequence>
<feature type="chain" id="PRO_0000462111" description="Trivalent organoarsenical cleaving enzyme">
    <location>
        <begin position="1"/>
        <end position="161"/>
    </location>
</feature>
<feature type="domain" description="VOC" evidence="2">
    <location>
        <begin position="2"/>
        <end position="119"/>
    </location>
</feature>
<feature type="binding site" evidence="1">
    <location>
        <position position="5"/>
    </location>
    <ligand>
        <name>Fe(2+)</name>
        <dbReference type="ChEBI" id="CHEBI:29033"/>
    </ligand>
</feature>
<feature type="binding site" evidence="1">
    <location>
        <position position="62"/>
    </location>
    <ligand>
        <name>Fe(2+)</name>
        <dbReference type="ChEBI" id="CHEBI:29033"/>
    </ligand>
</feature>
<feature type="binding site" evidence="1">
    <location>
        <position position="96"/>
    </location>
    <ligand>
        <name>roxarsone (III)</name>
        <dbReference type="ChEBI" id="CHEBI:231974"/>
    </ligand>
</feature>
<feature type="binding site" evidence="1">
    <location>
        <position position="97"/>
    </location>
    <ligand>
        <name>roxarsone (III)</name>
        <dbReference type="ChEBI" id="CHEBI:231974"/>
    </ligand>
</feature>
<feature type="binding site" evidence="1">
    <location>
        <position position="115"/>
    </location>
    <ligand>
        <name>Fe(2+)</name>
        <dbReference type="ChEBI" id="CHEBI:29033"/>
    </ligand>
</feature>
<feature type="mutagenesis site" description="Loss of catalytic activity and iron binding." evidence="4">
    <original>H</original>
    <variation>A</variation>
    <location>
        <position position="5"/>
    </location>
</feature>
<feature type="mutagenesis site" description="Loss of catalytic activity and iron binding." evidence="4">
    <original>H</original>
    <variation>A</variation>
    <location>
        <position position="62"/>
    </location>
</feature>
<feature type="mutagenesis site" description="Loss of catalytic activity and phenylarsonous acid (III) binding." evidence="4">
    <original>CC</original>
    <variation>SS</variation>
    <location>
        <begin position="96"/>
        <end position="97"/>
    </location>
</feature>
<feature type="mutagenesis site" description="Loss of catalytic activity and iron binding." evidence="4">
    <original>E</original>
    <variation>A</variation>
    <location>
        <position position="115"/>
    </location>
</feature>
<name>ARSI_BACX0</name>
<organism>
    <name type="scientific">Bacillus sp. (strain MD1)</name>
    <dbReference type="NCBI Taxonomy" id="1501233"/>
    <lineage>
        <taxon>Bacteria</taxon>
        <taxon>Bacillati</taxon>
        <taxon>Bacillota</taxon>
        <taxon>Bacilli</taxon>
        <taxon>Bacillales</taxon>
        <taxon>Bacillaceae</taxon>
        <taxon>Bacillus</taxon>
    </lineage>
</organism>
<protein>
    <recommendedName>
        <fullName evidence="7">Trivalent organoarsenical cleaving enzyme</fullName>
        <ecNumber evidence="3 4">1.13.11.-</ecNumber>
    </recommendedName>
    <alternativeName>
        <fullName evidence="5">Arsenic inducible gene ArsI</fullName>
    </alternativeName>
    <alternativeName>
        <fullName evidence="5 6">C-As lyase</fullName>
    </alternativeName>
    <alternativeName>
        <fullName evidence="5">Methylarsonous acid demethylase</fullName>
        <shortName evidence="5">MAs(III) demethylase</shortName>
    </alternativeName>
</protein>
<proteinExistence type="evidence at protein level"/>
<reference key="1">
    <citation type="journal article" date="2014" name="Proc. Natl. Acad. Sci. U.S.A.">
        <title>A C-As lyase for degradation of environmental organoarsenical herbicides and animal husbandry growth promoters.</title>
        <authorList>
            <person name="Yoshinaga M."/>
            <person name="Rosen B.P."/>
        </authorList>
    </citation>
    <scope>NUCLEOTIDE SEQUENCE [GENOMIC DNA]</scope>
    <scope>FUNCTION</scope>
    <scope>CATALYTIC ACTIVITY</scope>
    <scope>COFACTOR</scope>
    <scope>BIOPHYSICOCHEMICAL PROPERTIES</scope>
    <source>
        <strain>MD1</strain>
    </source>
</reference>
<reference key="2">
    <citation type="journal article" date="2017" name="Environ. Sci. Technol.">
        <title>Biochemical Characterization of ArsI: A Novel C-As Lyase for Degradation of Environmental Organoarsenicals.</title>
        <authorList>
            <person name="Pawitwar S.S."/>
            <person name="Nadar V.S."/>
            <person name="Kandegedara A."/>
            <person name="Stemmler T.L."/>
            <person name="Rosen B.P."/>
            <person name="Yoshinaga M."/>
        </authorList>
    </citation>
    <scope>FUNCTION</scope>
    <scope>CATALYTIC ACTIVITY</scope>
    <scope>COFACTOR</scope>
    <scope>ACTIVITY REGULATION</scope>
    <scope>3D-STRUCTURE MODELING</scope>
    <scope>MUTAGENESIS OF HIS-5; HIS-62; 96-CYS-CYS-97 AND GLU-115</scope>
    <source>
        <strain>MD1</strain>
    </source>
</reference>
<gene>
    <name evidence="5 9" type="primary">arsI</name>
</gene>